<organism>
    <name type="scientific">Salmonella choleraesuis (strain SC-B67)</name>
    <dbReference type="NCBI Taxonomy" id="321314"/>
    <lineage>
        <taxon>Bacteria</taxon>
        <taxon>Pseudomonadati</taxon>
        <taxon>Pseudomonadota</taxon>
        <taxon>Gammaproteobacteria</taxon>
        <taxon>Enterobacterales</taxon>
        <taxon>Enterobacteriaceae</taxon>
        <taxon>Salmonella</taxon>
    </lineage>
</organism>
<protein>
    <recommendedName>
        <fullName evidence="1">Oxygen-dependent coproporphyrinogen-III oxidase</fullName>
        <shortName evidence="1">CPO</shortName>
        <shortName evidence="1">Coprogen oxidase</shortName>
        <shortName evidence="1">Coproporphyrinogenase</shortName>
        <ecNumber evidence="1">1.3.3.3</ecNumber>
    </recommendedName>
</protein>
<name>HEM6_SALCH</name>
<feature type="chain" id="PRO_1000019495" description="Oxygen-dependent coproporphyrinogen-III oxidase">
    <location>
        <begin position="1"/>
        <end position="299"/>
    </location>
</feature>
<feature type="region of interest" description="Important for dimerization" evidence="1">
    <location>
        <begin position="240"/>
        <end position="275"/>
    </location>
</feature>
<feature type="active site" description="Proton donor" evidence="1">
    <location>
        <position position="106"/>
    </location>
</feature>
<feature type="binding site" evidence="1">
    <location>
        <position position="92"/>
    </location>
    <ligand>
        <name>substrate</name>
    </ligand>
</feature>
<feature type="binding site" evidence="1">
    <location>
        <position position="96"/>
    </location>
    <ligand>
        <name>a divalent metal cation</name>
        <dbReference type="ChEBI" id="CHEBI:60240"/>
    </ligand>
</feature>
<feature type="binding site" evidence="1">
    <location>
        <position position="106"/>
    </location>
    <ligand>
        <name>a divalent metal cation</name>
        <dbReference type="ChEBI" id="CHEBI:60240"/>
    </ligand>
</feature>
<feature type="binding site" evidence="1">
    <location>
        <begin position="108"/>
        <end position="110"/>
    </location>
    <ligand>
        <name>substrate</name>
    </ligand>
</feature>
<feature type="binding site" evidence="1">
    <location>
        <position position="145"/>
    </location>
    <ligand>
        <name>a divalent metal cation</name>
        <dbReference type="ChEBI" id="CHEBI:60240"/>
    </ligand>
</feature>
<feature type="binding site" evidence="1">
    <location>
        <position position="175"/>
    </location>
    <ligand>
        <name>a divalent metal cation</name>
        <dbReference type="ChEBI" id="CHEBI:60240"/>
    </ligand>
</feature>
<feature type="binding site" evidence="1">
    <location>
        <begin position="258"/>
        <end position="260"/>
    </location>
    <ligand>
        <name>substrate</name>
    </ligand>
</feature>
<feature type="site" description="Important for dimerization" evidence="1">
    <location>
        <position position="175"/>
    </location>
</feature>
<sequence>MKPDAHHVKQFLLRLQDDICQKLSAVDGANFVEDSWRREAGGGGRSRVLRNGGIFEQAGVNFSHVHGDAMPASATAHRPELAGRSFEAMGVSLVVHPHNPYIPTSHANVRFFIAEKPGADPVWWFGGGFDLTPYYGFEEDAVHWHRTARDLCQPFGDDVYPRYKKWCDDYFFLKHRNEQRGIGGLFFDDLNTPDFDHCFDFMQAVGNGYTRAYLPIVERRKAMVWGERERNFQLYRRGRYVEFNLVWDRGTLFGLQTGGRTESILMSMPPLVRWEYDWQPEAGSPEAALSEFIQVRDWI</sequence>
<proteinExistence type="inferred from homology"/>
<gene>
    <name evidence="1" type="primary">hemF</name>
    <name type="ordered locus">SCH_2450</name>
</gene>
<evidence type="ECO:0000255" key="1">
    <source>
        <dbReference type="HAMAP-Rule" id="MF_00333"/>
    </source>
</evidence>
<keyword id="KW-0963">Cytoplasm</keyword>
<keyword id="KW-0350">Heme biosynthesis</keyword>
<keyword id="KW-0479">Metal-binding</keyword>
<keyword id="KW-0560">Oxidoreductase</keyword>
<keyword id="KW-0627">Porphyrin biosynthesis</keyword>
<reference key="1">
    <citation type="journal article" date="2005" name="Nucleic Acids Res.">
        <title>The genome sequence of Salmonella enterica serovar Choleraesuis, a highly invasive and resistant zoonotic pathogen.</title>
        <authorList>
            <person name="Chiu C.-H."/>
            <person name="Tang P."/>
            <person name="Chu C."/>
            <person name="Hu S."/>
            <person name="Bao Q."/>
            <person name="Yu J."/>
            <person name="Chou Y.-Y."/>
            <person name="Wang H.-S."/>
            <person name="Lee Y.-S."/>
        </authorList>
    </citation>
    <scope>NUCLEOTIDE SEQUENCE [LARGE SCALE GENOMIC DNA]</scope>
    <source>
        <strain>SC-B67</strain>
    </source>
</reference>
<dbReference type="EC" id="1.3.3.3" evidence="1"/>
<dbReference type="EMBL" id="AE017220">
    <property type="protein sequence ID" value="AAX66356.1"/>
    <property type="molecule type" value="Genomic_DNA"/>
</dbReference>
<dbReference type="SMR" id="Q57LQ6"/>
<dbReference type="KEGG" id="sec:SCH_2450"/>
<dbReference type="HOGENOM" id="CLU_026169_0_1_6"/>
<dbReference type="UniPathway" id="UPA00251">
    <property type="reaction ID" value="UER00322"/>
</dbReference>
<dbReference type="Proteomes" id="UP000000538">
    <property type="component" value="Chromosome"/>
</dbReference>
<dbReference type="GO" id="GO:0005737">
    <property type="term" value="C:cytoplasm"/>
    <property type="evidence" value="ECO:0007669"/>
    <property type="project" value="UniProtKB-SubCell"/>
</dbReference>
<dbReference type="GO" id="GO:0004109">
    <property type="term" value="F:coproporphyrinogen oxidase activity"/>
    <property type="evidence" value="ECO:0007669"/>
    <property type="project" value="UniProtKB-UniRule"/>
</dbReference>
<dbReference type="GO" id="GO:0046872">
    <property type="term" value="F:metal ion binding"/>
    <property type="evidence" value="ECO:0007669"/>
    <property type="project" value="UniProtKB-KW"/>
</dbReference>
<dbReference type="GO" id="GO:0042803">
    <property type="term" value="F:protein homodimerization activity"/>
    <property type="evidence" value="ECO:0000250"/>
    <property type="project" value="UniProtKB"/>
</dbReference>
<dbReference type="GO" id="GO:0006782">
    <property type="term" value="P:protoporphyrinogen IX biosynthetic process"/>
    <property type="evidence" value="ECO:0007669"/>
    <property type="project" value="UniProtKB-UniRule"/>
</dbReference>
<dbReference type="FunFam" id="3.40.1500.10:FF:000001">
    <property type="entry name" value="Oxygen-dependent coproporphyrinogen-III oxidase"/>
    <property type="match status" value="1"/>
</dbReference>
<dbReference type="Gene3D" id="3.40.1500.10">
    <property type="entry name" value="Coproporphyrinogen III oxidase, aerobic"/>
    <property type="match status" value="1"/>
</dbReference>
<dbReference type="HAMAP" id="MF_00333">
    <property type="entry name" value="Coprogen_oxidas"/>
    <property type="match status" value="1"/>
</dbReference>
<dbReference type="InterPro" id="IPR001260">
    <property type="entry name" value="Coprogen_oxidase_aer"/>
</dbReference>
<dbReference type="InterPro" id="IPR036406">
    <property type="entry name" value="Coprogen_oxidase_aer_sf"/>
</dbReference>
<dbReference type="InterPro" id="IPR018375">
    <property type="entry name" value="Coprogen_oxidase_CS"/>
</dbReference>
<dbReference type="NCBIfam" id="NF003727">
    <property type="entry name" value="PRK05330.1"/>
    <property type="match status" value="1"/>
</dbReference>
<dbReference type="PANTHER" id="PTHR10755">
    <property type="entry name" value="COPROPORPHYRINOGEN III OXIDASE, MITOCHONDRIAL"/>
    <property type="match status" value="1"/>
</dbReference>
<dbReference type="PANTHER" id="PTHR10755:SF0">
    <property type="entry name" value="OXYGEN-DEPENDENT COPROPORPHYRINOGEN-III OXIDASE, MITOCHONDRIAL"/>
    <property type="match status" value="1"/>
</dbReference>
<dbReference type="Pfam" id="PF01218">
    <property type="entry name" value="Coprogen_oxidas"/>
    <property type="match status" value="1"/>
</dbReference>
<dbReference type="PIRSF" id="PIRSF000166">
    <property type="entry name" value="Coproporphyri_ox"/>
    <property type="match status" value="1"/>
</dbReference>
<dbReference type="PRINTS" id="PR00073">
    <property type="entry name" value="COPRGNOXDASE"/>
</dbReference>
<dbReference type="SUPFAM" id="SSF102886">
    <property type="entry name" value="Coproporphyrinogen III oxidase"/>
    <property type="match status" value="1"/>
</dbReference>
<dbReference type="PROSITE" id="PS01021">
    <property type="entry name" value="COPROGEN_OXIDASE"/>
    <property type="match status" value="1"/>
</dbReference>
<accession>Q57LQ6</accession>
<comment type="function">
    <text evidence="1">Involved in the heme biosynthesis. Catalyzes the aerobic oxidative decarboxylation of propionate groups of rings A and B of coproporphyrinogen-III to yield the vinyl groups in protoporphyrinogen-IX.</text>
</comment>
<comment type="catalytic activity">
    <reaction evidence="1">
        <text>coproporphyrinogen III + O2 + 2 H(+) = protoporphyrinogen IX + 2 CO2 + 2 H2O</text>
        <dbReference type="Rhea" id="RHEA:18257"/>
        <dbReference type="ChEBI" id="CHEBI:15377"/>
        <dbReference type="ChEBI" id="CHEBI:15378"/>
        <dbReference type="ChEBI" id="CHEBI:15379"/>
        <dbReference type="ChEBI" id="CHEBI:16526"/>
        <dbReference type="ChEBI" id="CHEBI:57307"/>
        <dbReference type="ChEBI" id="CHEBI:57309"/>
        <dbReference type="EC" id="1.3.3.3"/>
    </reaction>
</comment>
<comment type="cofactor">
    <cofactor evidence="1">
        <name>a divalent metal cation</name>
        <dbReference type="ChEBI" id="CHEBI:60240"/>
    </cofactor>
</comment>
<comment type="pathway">
    <text evidence="1">Porphyrin-containing compound metabolism; protoporphyrin-IX biosynthesis; protoporphyrinogen-IX from coproporphyrinogen-III (O2 route): step 1/1.</text>
</comment>
<comment type="subunit">
    <text evidence="1">Homodimer.</text>
</comment>
<comment type="subcellular location">
    <subcellularLocation>
        <location evidence="1">Cytoplasm</location>
    </subcellularLocation>
</comment>
<comment type="similarity">
    <text evidence="1">Belongs to the aerobic coproporphyrinogen-III oxidase family.</text>
</comment>